<comment type="function">
    <text evidence="3">Catalyzes the hydrolysis of D-xylono-1,4-lactone-5-phosphate and L-arabino-1,4-lactone-5-phosphate. Also able to hydrolyze carboxy 1,4-lactones.</text>
</comment>
<comment type="catalytic activity">
    <reaction evidence="3">
        <text>a 1,4-lactone + H2O = a 4-hydroxyacid + H(+)</text>
        <dbReference type="Rhea" id="RHEA:12745"/>
        <dbReference type="ChEBI" id="CHEBI:15377"/>
        <dbReference type="ChEBI" id="CHEBI:15378"/>
        <dbReference type="ChEBI" id="CHEBI:37581"/>
        <dbReference type="ChEBI" id="CHEBI:136596"/>
        <dbReference type="EC" id="3.1.1.25"/>
    </reaction>
</comment>
<comment type="catalytic activity">
    <reaction evidence="3">
        <text>D-xylono-1,4-lactone 5-phosphate + H2O = 5-phospho-D-xylonate + H(+)</text>
        <dbReference type="Rhea" id="RHEA:52644"/>
        <dbReference type="ChEBI" id="CHEBI:15377"/>
        <dbReference type="ChEBI" id="CHEBI:15378"/>
        <dbReference type="ChEBI" id="CHEBI:136749"/>
        <dbReference type="ChEBI" id="CHEBI:136751"/>
        <dbReference type="EC" id="3.1.1.104"/>
    </reaction>
</comment>
<comment type="catalytic activity">
    <reaction evidence="3">
        <text>L-arabino-1,4-lactone 5-phosphate + H2O = 5-phospho-L-arabinonate + H(+)</text>
        <dbReference type="Rhea" id="RHEA:52648"/>
        <dbReference type="ChEBI" id="CHEBI:15377"/>
        <dbReference type="ChEBI" id="CHEBI:15378"/>
        <dbReference type="ChEBI" id="CHEBI:136753"/>
        <dbReference type="ChEBI" id="CHEBI:136756"/>
        <dbReference type="EC" id="3.1.1.104"/>
    </reaction>
</comment>
<comment type="cofactor">
    <cofactor evidence="5">
        <name>Zn(2+)</name>
        <dbReference type="ChEBI" id="CHEBI:29105"/>
    </cofactor>
    <text evidence="1">Binds 2 Zn(2+) ions per subunit.</text>
</comment>
<comment type="biophysicochemical properties">
    <kinetics>
        <KM evidence="3">0.9 mM for D-xylono-1,4-lactone-5-phosphate</KM>
        <KM evidence="3">0.66 mM for L-arabino-1,4-lactone-5-phosphate</KM>
        <text evidence="3">kcat is 51 sec(-1) with D-xylono-1,4-lactone-5-phosphate as substrate. kcat is 8.7 sec(-1) with L-arabino-1,4-lactone-5-phosphate as substrate.</text>
    </kinetics>
</comment>
<comment type="similarity">
    <text evidence="2">Belongs to the metallo-dependent hydrolases superfamily. Phosphotriesterase family.</text>
</comment>
<accession>A5IZ80</accession>
<feature type="chain" id="PRO_0000439669" description="Phospho-furanose lactonase">
    <location>
        <begin position="1"/>
        <end position="353"/>
    </location>
</feature>
<feature type="binding site" evidence="1">
    <location>
        <position position="25"/>
    </location>
    <ligand>
        <name>Zn(2+)</name>
        <dbReference type="ChEBI" id="CHEBI:29105"/>
        <label>1</label>
    </ligand>
</feature>
<feature type="binding site" evidence="1">
    <location>
        <position position="27"/>
    </location>
    <ligand>
        <name>Zn(2+)</name>
        <dbReference type="ChEBI" id="CHEBI:29105"/>
        <label>1</label>
    </ligand>
</feature>
<feature type="binding site" description="via carbamate group" evidence="1">
    <location>
        <position position="153"/>
    </location>
    <ligand>
        <name>Zn(2+)</name>
        <dbReference type="ChEBI" id="CHEBI:29105"/>
        <label>1</label>
    </ligand>
</feature>
<feature type="binding site" description="via carbamate group" evidence="1">
    <location>
        <position position="153"/>
    </location>
    <ligand>
        <name>Zn(2+)</name>
        <dbReference type="ChEBI" id="CHEBI:29105"/>
        <label>2</label>
    </ligand>
</feature>
<feature type="binding site" evidence="1">
    <location>
        <position position="186"/>
    </location>
    <ligand>
        <name>Zn(2+)</name>
        <dbReference type="ChEBI" id="CHEBI:29105"/>
        <label>2</label>
    </ligand>
</feature>
<feature type="binding site" evidence="1">
    <location>
        <position position="214"/>
    </location>
    <ligand>
        <name>Zn(2+)</name>
        <dbReference type="ChEBI" id="CHEBI:29105"/>
        <label>2</label>
    </ligand>
</feature>
<feature type="binding site" evidence="1">
    <location>
        <begin position="244"/>
        <end position="245"/>
    </location>
    <ligand>
        <name>substrate</name>
    </ligand>
</feature>
<feature type="binding site" evidence="1">
    <location>
        <position position="272"/>
    </location>
    <ligand>
        <name>Zn(2+)</name>
        <dbReference type="ChEBI" id="CHEBI:29105"/>
        <label>1</label>
    </ligand>
</feature>
<feature type="binding site" evidence="1">
    <location>
        <begin position="275"/>
        <end position="278"/>
    </location>
    <ligand>
        <name>substrate</name>
    </ligand>
</feature>
<feature type="modified residue" description="N6-carboxylysine" evidence="1">
    <location>
        <position position="153"/>
    </location>
</feature>
<proteinExistence type="evidence at protein level"/>
<gene>
    <name evidence="6" type="ordered locus">MAG6390</name>
</gene>
<reference key="1">
    <citation type="journal article" date="2007" name="PLoS Genet.">
        <title>Being pathogenic, plastic, and sexual while living with a nearly minimal bacterial genome.</title>
        <authorList>
            <person name="Sirand-Pugnet P."/>
            <person name="Lartigue C."/>
            <person name="Marenda M."/>
            <person name="Jacob D."/>
            <person name="Barre A."/>
            <person name="Barbe V."/>
            <person name="Schenowitz C."/>
            <person name="Mangenot S."/>
            <person name="Couloux A."/>
            <person name="Segurens B."/>
            <person name="de Daruvar A."/>
            <person name="Blanchard A."/>
            <person name="Citti C."/>
        </authorList>
    </citation>
    <scope>NUCLEOTIDE SEQUENCE [LARGE SCALE GENOMIC DNA]</scope>
    <source>
        <strain evidence="7">NCTC 10123 / CIP 59.7 / PG2</strain>
    </source>
</reference>
<reference key="2">
    <citation type="journal article" date="2014" name="Biochemistry">
        <title>Functional annotation and structural characterization of a novel lactonase hydrolyzing D-xylono-1,4-lactone-5-phosphate and L-arabino-1,4-lactone-5-phosphate.</title>
        <authorList>
            <person name="Korczynska M."/>
            <person name="Xiang D.F."/>
            <person name="Zhang Z."/>
            <person name="Xu C."/>
            <person name="Narindoshvili T."/>
            <person name="Kamat S.S."/>
            <person name="Williams H.J."/>
            <person name="Chang S.S."/>
            <person name="Kolb P."/>
            <person name="Hillerich B."/>
            <person name="Sauder J.M."/>
            <person name="Burley S.K."/>
            <person name="Almo S.C."/>
            <person name="Swaminathan S."/>
            <person name="Shoichet B.K."/>
            <person name="Raushel F.M."/>
        </authorList>
    </citation>
    <scope>FUNCTION</scope>
    <scope>CATALYTIC ACTIVITY</scope>
    <scope>BIOPHYSICOCHEMICAL PROPERTIES</scope>
    <scope>COFACTOR</scope>
    <scope>SUBSTRATE SPECIFICITY</scope>
</reference>
<dbReference type="EC" id="3.1.1.104" evidence="3"/>
<dbReference type="EC" id="3.1.1.25" evidence="3"/>
<dbReference type="EMBL" id="CU179680">
    <property type="protein sequence ID" value="CAL59339.1"/>
    <property type="molecule type" value="Genomic_DNA"/>
</dbReference>
<dbReference type="RefSeq" id="WP_011949793.1">
    <property type="nucleotide sequence ID" value="NC_009497.1"/>
</dbReference>
<dbReference type="SMR" id="A5IZ80"/>
<dbReference type="STRING" id="347257.MAG6390"/>
<dbReference type="GeneID" id="93358372"/>
<dbReference type="KEGG" id="maa:MAG6390"/>
<dbReference type="HOGENOM" id="CLU_054760_1_1_14"/>
<dbReference type="BRENDA" id="3.1.1.104">
    <property type="organism ID" value="16315"/>
</dbReference>
<dbReference type="Proteomes" id="UP000007065">
    <property type="component" value="Chromosome"/>
</dbReference>
<dbReference type="GO" id="GO:0050490">
    <property type="term" value="F:1,4-lactonase activity"/>
    <property type="evidence" value="ECO:0000314"/>
    <property type="project" value="CACAO"/>
</dbReference>
<dbReference type="GO" id="GO:0008270">
    <property type="term" value="F:zinc ion binding"/>
    <property type="evidence" value="ECO:0007669"/>
    <property type="project" value="InterPro"/>
</dbReference>
<dbReference type="GO" id="GO:0009056">
    <property type="term" value="P:catabolic process"/>
    <property type="evidence" value="ECO:0007669"/>
    <property type="project" value="InterPro"/>
</dbReference>
<dbReference type="CDD" id="cd00530">
    <property type="entry name" value="PTE"/>
    <property type="match status" value="1"/>
</dbReference>
<dbReference type="Gene3D" id="3.20.20.140">
    <property type="entry name" value="Metal-dependent hydrolases"/>
    <property type="match status" value="1"/>
</dbReference>
<dbReference type="InterPro" id="IPR032466">
    <property type="entry name" value="Metal_Hydrolase"/>
</dbReference>
<dbReference type="InterPro" id="IPR054957">
    <property type="entry name" value="PhFuoseLconase"/>
</dbReference>
<dbReference type="InterPro" id="IPR001559">
    <property type="entry name" value="Phosphotriesterase"/>
</dbReference>
<dbReference type="NCBIfam" id="NF045706">
    <property type="entry name" value="PhFuoseLconase"/>
    <property type="match status" value="1"/>
</dbReference>
<dbReference type="PANTHER" id="PTHR10819">
    <property type="entry name" value="PHOSPHOTRIESTERASE-RELATED"/>
    <property type="match status" value="1"/>
</dbReference>
<dbReference type="PANTHER" id="PTHR10819:SF3">
    <property type="entry name" value="PHOSPHOTRIESTERASE-RELATED PROTEIN"/>
    <property type="match status" value="1"/>
</dbReference>
<dbReference type="Pfam" id="PF02126">
    <property type="entry name" value="PTE"/>
    <property type="match status" value="1"/>
</dbReference>
<dbReference type="PIRSF" id="PIRSF016839">
    <property type="entry name" value="PhP"/>
    <property type="match status" value="1"/>
</dbReference>
<dbReference type="SUPFAM" id="SSF51556">
    <property type="entry name" value="Metallo-dependent hydrolases"/>
    <property type="match status" value="1"/>
</dbReference>
<dbReference type="PROSITE" id="PS51347">
    <property type="entry name" value="PHOSPHOTRIESTERASE_2"/>
    <property type="match status" value="1"/>
</dbReference>
<organism>
    <name type="scientific">Mycoplasmopsis agalactiae (strain NCTC 10123 / CIP 59.7 / PG2)</name>
    <name type="common">Mycoplasma agalactiae</name>
    <dbReference type="NCBI Taxonomy" id="347257"/>
    <lineage>
        <taxon>Bacteria</taxon>
        <taxon>Bacillati</taxon>
        <taxon>Mycoplasmatota</taxon>
        <taxon>Mycoplasmoidales</taxon>
        <taxon>Metamycoplasmataceae</taxon>
        <taxon>Mycoplasmopsis</taxon>
    </lineage>
</organism>
<evidence type="ECO:0000250" key="1">
    <source>
        <dbReference type="UniProtKB" id="Q4A724"/>
    </source>
</evidence>
<evidence type="ECO:0000255" key="2">
    <source>
        <dbReference type="PROSITE-ProRule" id="PRU00679"/>
    </source>
</evidence>
<evidence type="ECO:0000269" key="3">
    <source>
    </source>
</evidence>
<evidence type="ECO:0000303" key="4">
    <source>
    </source>
</evidence>
<evidence type="ECO:0000305" key="5">
    <source>
    </source>
</evidence>
<evidence type="ECO:0000312" key="6">
    <source>
        <dbReference type="EMBL" id="CAL59339.1"/>
    </source>
</evidence>
<evidence type="ECO:0000312" key="7">
    <source>
        <dbReference type="Proteomes" id="UP000007065"/>
    </source>
</evidence>
<name>PFLAC_MYCAP</name>
<sequence length="353" mass="39497">MAKDKFVRTVLGDVPAESIGITDCHDHLIKNGGPEMHEHPDFLMIDVEAAKKEVQEYVDHGGKTIVTMDPPNVGRDVYRMLEIAEAFKGKANIVMSTGFHKAAFYDKYSSWLACVPTDDIVKMMVAEVEEGMDEYNYNGPVVKRSKAKAGIIKAGTGYAAIDRLELKALEVAARTSITTGCPILVHTQLGTMALEVAQHLIGFGANPRKIQLSHLNKNPDRYYYEKIIKETGVTICFDGPDRVKYYPDSLLADHIKYLVDKGLQKHITLSLDAGRILYQRNYGLTKGKETFGLSYLFERFIPLLKQVGVSQEAIDDILINNPREILAFDEPRVYDASKVSSEVVQLKKDLKLL</sequence>
<protein>
    <recommendedName>
        <fullName evidence="4">Phospho-furanose lactonase</fullName>
        <ecNumber evidence="3">3.1.1.104</ecNumber>
        <ecNumber evidence="3">3.1.1.25</ecNumber>
    </recommendedName>
</protein>
<keyword id="KW-0378">Hydrolase</keyword>
<keyword id="KW-0479">Metal-binding</keyword>
<keyword id="KW-1185">Reference proteome</keyword>
<keyword id="KW-0862">Zinc</keyword>